<dbReference type="EC" id="4.6.1.-" evidence="4"/>
<dbReference type="EMBL" id="FJ171528">
    <property type="protein sequence ID" value="ACN49024.1"/>
    <property type="molecule type" value="mRNA"/>
</dbReference>
<dbReference type="SMR" id="C0JB93"/>
<dbReference type="GO" id="GO:0005576">
    <property type="term" value="C:extracellular region"/>
    <property type="evidence" value="ECO:0007669"/>
    <property type="project" value="UniProtKB-SubCell"/>
</dbReference>
<dbReference type="GO" id="GO:0016829">
    <property type="term" value="F:lyase activity"/>
    <property type="evidence" value="ECO:0007669"/>
    <property type="project" value="UniProtKB-KW"/>
</dbReference>
<dbReference type="GO" id="GO:0046872">
    <property type="term" value="F:metal ion binding"/>
    <property type="evidence" value="ECO:0007669"/>
    <property type="project" value="UniProtKB-KW"/>
</dbReference>
<dbReference type="GO" id="GO:0008081">
    <property type="term" value="F:phosphoric diester hydrolase activity"/>
    <property type="evidence" value="ECO:0007669"/>
    <property type="project" value="InterPro"/>
</dbReference>
<dbReference type="GO" id="GO:0090729">
    <property type="term" value="F:toxin activity"/>
    <property type="evidence" value="ECO:0007669"/>
    <property type="project" value="UniProtKB-KW"/>
</dbReference>
<dbReference type="GO" id="GO:0031640">
    <property type="term" value="P:killing of cells of another organism"/>
    <property type="evidence" value="ECO:0007669"/>
    <property type="project" value="UniProtKB-KW"/>
</dbReference>
<dbReference type="GO" id="GO:0016042">
    <property type="term" value="P:lipid catabolic process"/>
    <property type="evidence" value="ECO:0007669"/>
    <property type="project" value="UniProtKB-KW"/>
</dbReference>
<dbReference type="CDD" id="cd08576">
    <property type="entry name" value="GDPD_like_SMaseD_PLD"/>
    <property type="match status" value="1"/>
</dbReference>
<dbReference type="Gene3D" id="3.20.20.190">
    <property type="entry name" value="Phosphatidylinositol (PI) phosphodiesterase"/>
    <property type="match status" value="1"/>
</dbReference>
<dbReference type="InterPro" id="IPR017946">
    <property type="entry name" value="PLC-like_Pdiesterase_TIM-brl"/>
</dbReference>
<dbReference type="SUPFAM" id="SSF51695">
    <property type="entry name" value="PLC-like phosphodiesterases"/>
    <property type="match status" value="1"/>
</dbReference>
<reference key="1">
    <citation type="journal article" date="2009" name="Mol. Biol. Evol.">
        <title>Molecular evolution, functional variation, and proposed nomenclature of the gene family that includes sphingomyelinase D in sicariid spider venoms.</title>
        <authorList>
            <person name="Binford G.J."/>
            <person name="Bodner M.R."/>
            <person name="Cordes M.H."/>
            <person name="Baldwin K.L."/>
            <person name="Rynerson M.R."/>
            <person name="Burns S.N."/>
            <person name="Zobel-Thropp P.A."/>
        </authorList>
    </citation>
    <scope>NUCLEOTIDE SEQUENCE [MRNA]</scope>
    <scope>NOMENCLATURE</scope>
    <source>
        <strain>Grootfontein</strain>
        <tissue>Venom gland</tissue>
    </source>
</reference>
<comment type="function">
    <text evidence="1 3">Dermonecrotic toxins cleave the phosphodiester linkage between the phosphate and headgroup of certain phospholipids (sphingolipid and lysolipid substrates), forming an alcohol (often choline) and a cyclic phosphate (By similarity). This toxin acts on sphingomyelin (SM) (By similarity). It may also act on ceramide phosphoethanolamine (CPE), lysophosphatidylcholine (LPC) and lysophosphatidylethanolamine (LPE), but not on lysophosphatidylserine (LPS), and lysophosphatidylglycerol (LPG) (By similarity). It acts by transphosphatidylation, releasing exclusively cyclic phosphate products as second products (By similarity). Induces dermonecrosis, hemolysis, increased vascular permeability, edema, inflammatory response, and platelet aggregation (By similarity).</text>
</comment>
<comment type="catalytic activity">
    <reaction evidence="1">
        <text>an N-(acyl)-sphingosylphosphocholine = an N-(acyl)-sphingosyl-1,3-cyclic phosphate + choline</text>
        <dbReference type="Rhea" id="RHEA:60652"/>
        <dbReference type="ChEBI" id="CHEBI:15354"/>
        <dbReference type="ChEBI" id="CHEBI:64583"/>
        <dbReference type="ChEBI" id="CHEBI:143892"/>
    </reaction>
</comment>
<comment type="catalytic activity">
    <reaction evidence="1">
        <text>an N-(acyl)-sphingosylphosphoethanolamine = an N-(acyl)-sphingosyl-1,3-cyclic phosphate + ethanolamine</text>
        <dbReference type="Rhea" id="RHEA:60648"/>
        <dbReference type="ChEBI" id="CHEBI:57603"/>
        <dbReference type="ChEBI" id="CHEBI:143891"/>
        <dbReference type="ChEBI" id="CHEBI:143892"/>
    </reaction>
</comment>
<comment type="catalytic activity">
    <reaction evidence="1">
        <text>a 1-acyl-sn-glycero-3-phosphocholine = a 1-acyl-sn-glycero-2,3-cyclic phosphate + choline</text>
        <dbReference type="Rhea" id="RHEA:60700"/>
        <dbReference type="ChEBI" id="CHEBI:15354"/>
        <dbReference type="ChEBI" id="CHEBI:58168"/>
        <dbReference type="ChEBI" id="CHEBI:143947"/>
    </reaction>
</comment>
<comment type="catalytic activity">
    <reaction evidence="1">
        <text>a 1-acyl-sn-glycero-3-phosphoethanolamine = a 1-acyl-sn-glycero-2,3-cyclic phosphate + ethanolamine</text>
        <dbReference type="Rhea" id="RHEA:60704"/>
        <dbReference type="ChEBI" id="CHEBI:57603"/>
        <dbReference type="ChEBI" id="CHEBI:64381"/>
        <dbReference type="ChEBI" id="CHEBI:143947"/>
    </reaction>
</comment>
<comment type="cofactor">
    <cofactor evidence="5">
        <name>Mg(2+)</name>
        <dbReference type="ChEBI" id="CHEBI:18420"/>
    </cofactor>
    <text evidence="5">Binds 1 Mg(2+) ion per subunit.</text>
</comment>
<comment type="subcellular location">
    <subcellularLocation>
        <location evidence="8">Secreted</location>
    </subcellularLocation>
</comment>
<comment type="tissue specificity">
    <text evidence="8">Expressed by the venom gland.</text>
</comment>
<comment type="similarity">
    <text evidence="7">Belongs to the arthropod phospholipase D family. Class II subfamily.</text>
</comment>
<comment type="caution">
    <text evidence="1 2 4">The most common activity assay for dermonecrotic toxins detects enzymatic activity by monitoring choline release from substrate. Liberation of choline from sphingomyelin (SM) or lysophosphatidylcholine (LPC) is commonly assumed to result from substrate hydrolysis, giving either ceramide-1-phosphate (C1P) or lysophosphatidic acid (LPA), respectively, as a second product. However, two studies from Lajoie and colleagues (2013 and 2015) report the observation of exclusive formation of cyclic phosphate products as second products, resulting from intramolecular transphosphatidylation. Cyclic phosphates have vastly different biological properties from their monoester counterparts, and they may be relevant to the pathology of brown spider envenomation.</text>
</comment>
<evidence type="ECO:0000250" key="1">
    <source>
        <dbReference type="UniProtKB" id="A0A0D4WTV1"/>
    </source>
</evidence>
<evidence type="ECO:0000250" key="2">
    <source>
        <dbReference type="UniProtKB" id="A0A0D4WV12"/>
    </source>
</evidence>
<evidence type="ECO:0000250" key="3">
    <source>
        <dbReference type="UniProtKB" id="P0CE80"/>
    </source>
</evidence>
<evidence type="ECO:0000250" key="4">
    <source>
        <dbReference type="UniProtKB" id="Q4ZFU2"/>
    </source>
</evidence>
<evidence type="ECO:0000250" key="5">
    <source>
        <dbReference type="UniProtKB" id="Q8I914"/>
    </source>
</evidence>
<evidence type="ECO:0000303" key="6">
    <source>
    </source>
</evidence>
<evidence type="ECO:0000305" key="7"/>
<evidence type="ECO:0000305" key="8">
    <source>
    </source>
</evidence>
<accession>C0JB93</accession>
<feature type="chain" id="PRO_0000392905" description="Dermonecrotic toxin LspiSicTox-betaIII2">
    <location>
        <begin position="1" status="less than"/>
        <end position="274"/>
    </location>
</feature>
<feature type="active site" evidence="5">
    <location>
        <position position="5"/>
    </location>
</feature>
<feature type="active site" description="Nucleophile" evidence="5">
    <location>
        <position position="41"/>
    </location>
</feature>
<feature type="binding site" evidence="5">
    <location>
        <position position="25"/>
    </location>
    <ligand>
        <name>Mg(2+)</name>
        <dbReference type="ChEBI" id="CHEBI:18420"/>
    </ligand>
</feature>
<feature type="binding site" evidence="5">
    <location>
        <position position="27"/>
    </location>
    <ligand>
        <name>Mg(2+)</name>
        <dbReference type="ChEBI" id="CHEBI:18420"/>
    </ligand>
</feature>
<feature type="binding site" evidence="5">
    <location>
        <position position="85"/>
    </location>
    <ligand>
        <name>Mg(2+)</name>
        <dbReference type="ChEBI" id="CHEBI:18420"/>
    </ligand>
</feature>
<feature type="disulfide bond" evidence="3">
    <location>
        <begin position="45"/>
        <end position="51"/>
    </location>
</feature>
<feature type="disulfide bond" evidence="3">
    <location>
        <begin position="47"/>
        <end position="189"/>
    </location>
</feature>
<feature type="non-terminal residue">
    <location>
        <position position="1"/>
    </location>
</feature>
<protein>
    <recommendedName>
        <fullName evidence="6">Dermonecrotic toxin LspiSicTox-betaIII2</fullName>
        <ecNumber evidence="4">4.6.1.-</ecNumber>
    </recommendedName>
    <alternativeName>
        <fullName>Phospholipase D</fullName>
        <shortName>PLD</shortName>
    </alternativeName>
    <alternativeName>
        <fullName>Sphingomyelin phosphodiesterase D</fullName>
        <shortName>SMD</shortName>
        <shortName>SMase D</shortName>
        <shortName>Sphingomyelinase D</shortName>
    </alternativeName>
</protein>
<sequence length="274" mass="31944">WIMGHMVNKKYQVDEFADLGANAIEFDVTFDSNYKADYTYHKVPCDCGRTCGRYEVFTEFLSYVKNETTPGHPSFREKLVLLQLDLKMSYLTESQSNEAGKDMAKKFLNYYWNRGSNGGRAYILLSIPSIDNYLFLTGFKQQLKTEGFEQYLDKVGVDFSGNEDLDSIVNVLGRLEDEHVWQSDGITNCWTRGISRLQDAIKRRDEDESRYGIKKVYTWTVDYYPSIRYYLRLGIDGVMTNFPNRVEYILNEEEFPGSLRMATIDDNPWEKYVG</sequence>
<name>B32_LOXSN</name>
<proteinExistence type="evidence at transcript level"/>
<organism>
    <name type="scientific">Loxosceles spinulosa</name>
    <name type="common">Recluse spider</name>
    <dbReference type="NCBI Taxonomy" id="571532"/>
    <lineage>
        <taxon>Eukaryota</taxon>
        <taxon>Metazoa</taxon>
        <taxon>Ecdysozoa</taxon>
        <taxon>Arthropoda</taxon>
        <taxon>Chelicerata</taxon>
        <taxon>Arachnida</taxon>
        <taxon>Araneae</taxon>
        <taxon>Araneomorphae</taxon>
        <taxon>Haplogynae</taxon>
        <taxon>Scytodoidea</taxon>
        <taxon>Sicariidae</taxon>
        <taxon>Loxosceles</taxon>
    </lineage>
</organism>
<keyword id="KW-0204">Cytolysis</keyword>
<keyword id="KW-1061">Dermonecrotic toxin</keyword>
<keyword id="KW-1015">Disulfide bond</keyword>
<keyword id="KW-0354">Hemolysis</keyword>
<keyword id="KW-0442">Lipid degradation</keyword>
<keyword id="KW-0443">Lipid metabolism</keyword>
<keyword id="KW-0456">Lyase</keyword>
<keyword id="KW-0460">Magnesium</keyword>
<keyword id="KW-0479">Metal-binding</keyword>
<keyword id="KW-0964">Secreted</keyword>
<keyword id="KW-0800">Toxin</keyword>